<proteinExistence type="inferred from homology"/>
<evidence type="ECO:0000255" key="1">
    <source>
        <dbReference type="HAMAP-Rule" id="MF_00300"/>
    </source>
</evidence>
<gene>
    <name evidence="1" type="primary">aroC</name>
    <name type="ordered locus">Pcar_2133</name>
</gene>
<accession>Q3A2N5</accession>
<name>AROC_SYNC1</name>
<comment type="function">
    <text evidence="1">Catalyzes the anti-1,4-elimination of the C-3 phosphate and the C-6 proR hydrogen from 5-enolpyruvylshikimate-3-phosphate (EPSP) to yield chorismate, which is the branch point compound that serves as the starting substrate for the three terminal pathways of aromatic amino acid biosynthesis. This reaction introduces a second double bond into the aromatic ring system.</text>
</comment>
<comment type="catalytic activity">
    <reaction evidence="1">
        <text>5-O-(1-carboxyvinyl)-3-phosphoshikimate = chorismate + phosphate</text>
        <dbReference type="Rhea" id="RHEA:21020"/>
        <dbReference type="ChEBI" id="CHEBI:29748"/>
        <dbReference type="ChEBI" id="CHEBI:43474"/>
        <dbReference type="ChEBI" id="CHEBI:57701"/>
        <dbReference type="EC" id="4.2.3.5"/>
    </reaction>
</comment>
<comment type="cofactor">
    <cofactor evidence="1">
        <name>FMNH2</name>
        <dbReference type="ChEBI" id="CHEBI:57618"/>
    </cofactor>
    <text evidence="1">Reduced FMN (FMNH(2)).</text>
</comment>
<comment type="pathway">
    <text evidence="1">Metabolic intermediate biosynthesis; chorismate biosynthesis; chorismate from D-erythrose 4-phosphate and phosphoenolpyruvate: step 7/7.</text>
</comment>
<comment type="subunit">
    <text evidence="1">Homotetramer.</text>
</comment>
<comment type="similarity">
    <text evidence="1">Belongs to the chorismate synthase family.</text>
</comment>
<feature type="chain" id="PRO_0000256309" description="Chorismate synthase">
    <location>
        <begin position="1"/>
        <end position="387"/>
    </location>
</feature>
<feature type="binding site" evidence="1">
    <location>
        <position position="42"/>
    </location>
    <ligand>
        <name>NADP(+)</name>
        <dbReference type="ChEBI" id="CHEBI:58349"/>
    </ligand>
</feature>
<feature type="binding site" evidence="1">
    <location>
        <position position="48"/>
    </location>
    <ligand>
        <name>NADP(+)</name>
        <dbReference type="ChEBI" id="CHEBI:58349"/>
    </ligand>
</feature>
<feature type="binding site" evidence="1">
    <location>
        <begin position="131"/>
        <end position="133"/>
    </location>
    <ligand>
        <name>FMN</name>
        <dbReference type="ChEBI" id="CHEBI:58210"/>
    </ligand>
</feature>
<feature type="binding site" evidence="1">
    <location>
        <begin position="251"/>
        <end position="252"/>
    </location>
    <ligand>
        <name>FMN</name>
        <dbReference type="ChEBI" id="CHEBI:58210"/>
    </ligand>
</feature>
<feature type="binding site" evidence="1">
    <location>
        <position position="295"/>
    </location>
    <ligand>
        <name>FMN</name>
        <dbReference type="ChEBI" id="CHEBI:58210"/>
    </ligand>
</feature>
<feature type="binding site" evidence="1">
    <location>
        <begin position="310"/>
        <end position="314"/>
    </location>
    <ligand>
        <name>FMN</name>
        <dbReference type="ChEBI" id="CHEBI:58210"/>
    </ligand>
</feature>
<feature type="binding site" evidence="1">
    <location>
        <position position="336"/>
    </location>
    <ligand>
        <name>FMN</name>
        <dbReference type="ChEBI" id="CHEBI:58210"/>
    </ligand>
</feature>
<keyword id="KW-0028">Amino-acid biosynthesis</keyword>
<keyword id="KW-0057">Aromatic amino acid biosynthesis</keyword>
<keyword id="KW-0274">FAD</keyword>
<keyword id="KW-0285">Flavoprotein</keyword>
<keyword id="KW-0288">FMN</keyword>
<keyword id="KW-0456">Lyase</keyword>
<keyword id="KW-0521">NADP</keyword>
<keyword id="KW-1185">Reference proteome</keyword>
<sequence>MNRLRYLTAGESHGPSLTAIIEGMPANLELNEGDINRDLARRQLGYGRGGRMLIEKDKVNFTSGVRWGKTLGSPITLSIQNRDWENWGKKMSPVAEDFVEGMAITHPRPGHADLTGVIKYRQDDARNILERSSARETAARVAVGALCKKFLADLGMSVLGYVSELGGVCADASLEDYHERFALSEESPCRTFDAEAEQRMIKAIDRAKEDGDSLGGVVEVAVLGAPVGLGSYVQWDRRLDGRLAYAMMSIQAFKGVEIGLGFEAGRRPGSQVHDEIFHQGDEFVRKTNRAGGLEGGMTNGAPIIVRGAMKPIPTLYQPLQTVDFRTKDAFAAVVERSDVCAVPAAAVVAEAVVAIEMAQAMLEKFGGDAMEEVKQNLQAYGEYVQRF</sequence>
<protein>
    <recommendedName>
        <fullName evidence="1">Chorismate synthase</fullName>
        <shortName evidence="1">CS</shortName>
        <ecNumber evidence="1">4.2.3.5</ecNumber>
    </recommendedName>
    <alternativeName>
        <fullName evidence="1">5-enolpyruvylshikimate-3-phosphate phospholyase</fullName>
    </alternativeName>
</protein>
<dbReference type="EC" id="4.2.3.5" evidence="1"/>
<dbReference type="EMBL" id="CP000142">
    <property type="protein sequence ID" value="ABA89372.1"/>
    <property type="molecule type" value="Genomic_DNA"/>
</dbReference>
<dbReference type="RefSeq" id="WP_011341885.1">
    <property type="nucleotide sequence ID" value="NC_007498.2"/>
</dbReference>
<dbReference type="SMR" id="Q3A2N5"/>
<dbReference type="STRING" id="338963.Pcar_2133"/>
<dbReference type="KEGG" id="pca:Pcar_2133"/>
<dbReference type="eggNOG" id="COG0082">
    <property type="taxonomic scope" value="Bacteria"/>
</dbReference>
<dbReference type="HOGENOM" id="CLU_034547_2_0_7"/>
<dbReference type="OrthoDB" id="9771806at2"/>
<dbReference type="UniPathway" id="UPA00053">
    <property type="reaction ID" value="UER00090"/>
</dbReference>
<dbReference type="Proteomes" id="UP000002534">
    <property type="component" value="Chromosome"/>
</dbReference>
<dbReference type="GO" id="GO:0005829">
    <property type="term" value="C:cytosol"/>
    <property type="evidence" value="ECO:0007669"/>
    <property type="project" value="TreeGrafter"/>
</dbReference>
<dbReference type="GO" id="GO:0004107">
    <property type="term" value="F:chorismate synthase activity"/>
    <property type="evidence" value="ECO:0007669"/>
    <property type="project" value="UniProtKB-UniRule"/>
</dbReference>
<dbReference type="GO" id="GO:0010181">
    <property type="term" value="F:FMN binding"/>
    <property type="evidence" value="ECO:0007669"/>
    <property type="project" value="TreeGrafter"/>
</dbReference>
<dbReference type="GO" id="GO:0008652">
    <property type="term" value="P:amino acid biosynthetic process"/>
    <property type="evidence" value="ECO:0007669"/>
    <property type="project" value="UniProtKB-KW"/>
</dbReference>
<dbReference type="GO" id="GO:0009073">
    <property type="term" value="P:aromatic amino acid family biosynthetic process"/>
    <property type="evidence" value="ECO:0007669"/>
    <property type="project" value="UniProtKB-KW"/>
</dbReference>
<dbReference type="GO" id="GO:0009423">
    <property type="term" value="P:chorismate biosynthetic process"/>
    <property type="evidence" value="ECO:0007669"/>
    <property type="project" value="UniProtKB-UniRule"/>
</dbReference>
<dbReference type="CDD" id="cd07304">
    <property type="entry name" value="Chorismate_synthase"/>
    <property type="match status" value="1"/>
</dbReference>
<dbReference type="FunFam" id="3.60.150.10:FF:000002">
    <property type="entry name" value="Chorismate synthase"/>
    <property type="match status" value="1"/>
</dbReference>
<dbReference type="Gene3D" id="3.60.150.10">
    <property type="entry name" value="Chorismate synthase AroC"/>
    <property type="match status" value="1"/>
</dbReference>
<dbReference type="HAMAP" id="MF_00300">
    <property type="entry name" value="Chorismate_synth"/>
    <property type="match status" value="1"/>
</dbReference>
<dbReference type="InterPro" id="IPR000453">
    <property type="entry name" value="Chorismate_synth"/>
</dbReference>
<dbReference type="InterPro" id="IPR035904">
    <property type="entry name" value="Chorismate_synth_AroC_sf"/>
</dbReference>
<dbReference type="InterPro" id="IPR020541">
    <property type="entry name" value="Chorismate_synthase_CS"/>
</dbReference>
<dbReference type="NCBIfam" id="TIGR00033">
    <property type="entry name" value="aroC"/>
    <property type="match status" value="1"/>
</dbReference>
<dbReference type="NCBIfam" id="NF003793">
    <property type="entry name" value="PRK05382.1"/>
    <property type="match status" value="1"/>
</dbReference>
<dbReference type="PANTHER" id="PTHR21085">
    <property type="entry name" value="CHORISMATE SYNTHASE"/>
    <property type="match status" value="1"/>
</dbReference>
<dbReference type="PANTHER" id="PTHR21085:SF0">
    <property type="entry name" value="CHORISMATE SYNTHASE"/>
    <property type="match status" value="1"/>
</dbReference>
<dbReference type="Pfam" id="PF01264">
    <property type="entry name" value="Chorismate_synt"/>
    <property type="match status" value="1"/>
</dbReference>
<dbReference type="PIRSF" id="PIRSF001456">
    <property type="entry name" value="Chorismate_synth"/>
    <property type="match status" value="1"/>
</dbReference>
<dbReference type="SUPFAM" id="SSF103263">
    <property type="entry name" value="Chorismate synthase, AroC"/>
    <property type="match status" value="1"/>
</dbReference>
<dbReference type="PROSITE" id="PS00787">
    <property type="entry name" value="CHORISMATE_SYNTHASE_1"/>
    <property type="match status" value="1"/>
</dbReference>
<dbReference type="PROSITE" id="PS00788">
    <property type="entry name" value="CHORISMATE_SYNTHASE_2"/>
    <property type="match status" value="1"/>
</dbReference>
<dbReference type="PROSITE" id="PS00789">
    <property type="entry name" value="CHORISMATE_SYNTHASE_3"/>
    <property type="match status" value="1"/>
</dbReference>
<organism>
    <name type="scientific">Syntrophotalea carbinolica (strain DSM 2380 / NBRC 103641 / GraBd1)</name>
    <name type="common">Pelobacter carbinolicus</name>
    <dbReference type="NCBI Taxonomy" id="338963"/>
    <lineage>
        <taxon>Bacteria</taxon>
        <taxon>Pseudomonadati</taxon>
        <taxon>Thermodesulfobacteriota</taxon>
        <taxon>Desulfuromonadia</taxon>
        <taxon>Desulfuromonadales</taxon>
        <taxon>Syntrophotaleaceae</taxon>
        <taxon>Syntrophotalea</taxon>
    </lineage>
</organism>
<reference key="1">
    <citation type="submission" date="2005-10" db="EMBL/GenBank/DDBJ databases">
        <title>Complete sequence of Pelobacter carbinolicus DSM 2380.</title>
        <authorList>
            <person name="Copeland A."/>
            <person name="Lucas S."/>
            <person name="Lapidus A."/>
            <person name="Barry K."/>
            <person name="Detter J.C."/>
            <person name="Glavina T."/>
            <person name="Hammon N."/>
            <person name="Israni S."/>
            <person name="Pitluck S."/>
            <person name="Chertkov O."/>
            <person name="Schmutz J."/>
            <person name="Larimer F."/>
            <person name="Land M."/>
            <person name="Kyrpides N."/>
            <person name="Ivanova N."/>
            <person name="Richardson P."/>
        </authorList>
    </citation>
    <scope>NUCLEOTIDE SEQUENCE [LARGE SCALE GENOMIC DNA]</scope>
    <source>
        <strain>DSM 2380 / NBRC 103641 / GraBd1</strain>
    </source>
</reference>